<gene>
    <name evidence="1" type="primary">rplR</name>
    <name type="ordered locus">CLI_3647</name>
</gene>
<sequence length="119" mass="13415">MFKKNDRSQSRTRRHMRVRKKIFGTAERPRLSVYRSEKHIYAQLIDDVEGKTLVAASSSEKGFDSVGSNKEGAKLVGKMIAEKALEKGLKKVVFDRGGFIYHGRIKELAEGAREAGLDF</sequence>
<comment type="function">
    <text evidence="1">This is one of the proteins that bind and probably mediate the attachment of the 5S RNA into the large ribosomal subunit, where it forms part of the central protuberance.</text>
</comment>
<comment type="subunit">
    <text evidence="1">Part of the 50S ribosomal subunit; part of the 5S rRNA/L5/L18/L25 subcomplex. Contacts the 5S and 23S rRNAs.</text>
</comment>
<comment type="similarity">
    <text evidence="1">Belongs to the universal ribosomal protein uL18 family.</text>
</comment>
<feature type="chain" id="PRO_1000053014" description="Large ribosomal subunit protein uL18">
    <location>
        <begin position="1"/>
        <end position="119"/>
    </location>
</feature>
<keyword id="KW-0687">Ribonucleoprotein</keyword>
<keyword id="KW-0689">Ribosomal protein</keyword>
<keyword id="KW-0694">RNA-binding</keyword>
<keyword id="KW-0699">rRNA-binding</keyword>
<accession>A7GJ58</accession>
<evidence type="ECO:0000255" key="1">
    <source>
        <dbReference type="HAMAP-Rule" id="MF_01337"/>
    </source>
</evidence>
<evidence type="ECO:0000305" key="2"/>
<dbReference type="EMBL" id="CP000728">
    <property type="protein sequence ID" value="ABS41170.1"/>
    <property type="molecule type" value="Genomic_DNA"/>
</dbReference>
<dbReference type="RefSeq" id="WP_012101130.1">
    <property type="nucleotide sequence ID" value="NC_009699.1"/>
</dbReference>
<dbReference type="SMR" id="A7GJ58"/>
<dbReference type="KEGG" id="cbf:CLI_3647"/>
<dbReference type="HOGENOM" id="CLU_098841_0_1_9"/>
<dbReference type="Proteomes" id="UP000002410">
    <property type="component" value="Chromosome"/>
</dbReference>
<dbReference type="GO" id="GO:0022625">
    <property type="term" value="C:cytosolic large ribosomal subunit"/>
    <property type="evidence" value="ECO:0007669"/>
    <property type="project" value="TreeGrafter"/>
</dbReference>
<dbReference type="GO" id="GO:0008097">
    <property type="term" value="F:5S rRNA binding"/>
    <property type="evidence" value="ECO:0007669"/>
    <property type="project" value="TreeGrafter"/>
</dbReference>
<dbReference type="GO" id="GO:0003735">
    <property type="term" value="F:structural constituent of ribosome"/>
    <property type="evidence" value="ECO:0007669"/>
    <property type="project" value="InterPro"/>
</dbReference>
<dbReference type="GO" id="GO:0006412">
    <property type="term" value="P:translation"/>
    <property type="evidence" value="ECO:0007669"/>
    <property type="project" value="UniProtKB-UniRule"/>
</dbReference>
<dbReference type="CDD" id="cd00432">
    <property type="entry name" value="Ribosomal_L18_L5e"/>
    <property type="match status" value="1"/>
</dbReference>
<dbReference type="FunFam" id="3.30.420.100:FF:000001">
    <property type="entry name" value="50S ribosomal protein L18"/>
    <property type="match status" value="1"/>
</dbReference>
<dbReference type="Gene3D" id="3.30.420.100">
    <property type="match status" value="1"/>
</dbReference>
<dbReference type="HAMAP" id="MF_01337_B">
    <property type="entry name" value="Ribosomal_uL18_B"/>
    <property type="match status" value="1"/>
</dbReference>
<dbReference type="InterPro" id="IPR004389">
    <property type="entry name" value="Ribosomal_uL18_bac-type"/>
</dbReference>
<dbReference type="InterPro" id="IPR005484">
    <property type="entry name" value="Ribosomal_uL18_bac/euk"/>
</dbReference>
<dbReference type="NCBIfam" id="TIGR00060">
    <property type="entry name" value="L18_bact"/>
    <property type="match status" value="1"/>
</dbReference>
<dbReference type="PANTHER" id="PTHR12899">
    <property type="entry name" value="39S RIBOSOMAL PROTEIN L18, MITOCHONDRIAL"/>
    <property type="match status" value="1"/>
</dbReference>
<dbReference type="PANTHER" id="PTHR12899:SF3">
    <property type="entry name" value="LARGE RIBOSOMAL SUBUNIT PROTEIN UL18M"/>
    <property type="match status" value="1"/>
</dbReference>
<dbReference type="Pfam" id="PF00861">
    <property type="entry name" value="Ribosomal_L18p"/>
    <property type="match status" value="1"/>
</dbReference>
<dbReference type="SUPFAM" id="SSF53137">
    <property type="entry name" value="Translational machinery components"/>
    <property type="match status" value="1"/>
</dbReference>
<proteinExistence type="inferred from homology"/>
<reference key="1">
    <citation type="submission" date="2007-06" db="EMBL/GenBank/DDBJ databases">
        <authorList>
            <person name="Brinkac L.M."/>
            <person name="Daugherty S."/>
            <person name="Dodson R.J."/>
            <person name="Madupu R."/>
            <person name="Brown J.L."/>
            <person name="Bruce D."/>
            <person name="Detter C."/>
            <person name="Munk C."/>
            <person name="Smith L.A."/>
            <person name="Smith T.J."/>
            <person name="White O."/>
            <person name="Brettin T.S."/>
        </authorList>
    </citation>
    <scope>NUCLEOTIDE SEQUENCE [LARGE SCALE GENOMIC DNA]</scope>
    <source>
        <strain>Langeland / NCTC 10281 / Type F</strain>
    </source>
</reference>
<name>RL18_CLOBL</name>
<organism>
    <name type="scientific">Clostridium botulinum (strain Langeland / NCTC 10281 / Type F)</name>
    <dbReference type="NCBI Taxonomy" id="441772"/>
    <lineage>
        <taxon>Bacteria</taxon>
        <taxon>Bacillati</taxon>
        <taxon>Bacillota</taxon>
        <taxon>Clostridia</taxon>
        <taxon>Eubacteriales</taxon>
        <taxon>Clostridiaceae</taxon>
        <taxon>Clostridium</taxon>
    </lineage>
</organism>
<protein>
    <recommendedName>
        <fullName evidence="1">Large ribosomal subunit protein uL18</fullName>
    </recommendedName>
    <alternativeName>
        <fullName evidence="2">50S ribosomal protein L18</fullName>
    </alternativeName>
</protein>